<gene>
    <name evidence="1" type="primary">nuoB</name>
    <name type="ordered locus">YPTB2586</name>
</gene>
<accession>Q669A1</accession>
<feature type="chain" id="PRO_0000376414" description="NADH-quinone oxidoreductase subunit B">
    <location>
        <begin position="1"/>
        <end position="225"/>
    </location>
</feature>
<feature type="binding site" evidence="1">
    <location>
        <position position="68"/>
    </location>
    <ligand>
        <name>[4Fe-4S] cluster</name>
        <dbReference type="ChEBI" id="CHEBI:49883"/>
    </ligand>
</feature>
<feature type="binding site" evidence="1">
    <location>
        <position position="69"/>
    </location>
    <ligand>
        <name>[4Fe-4S] cluster</name>
        <dbReference type="ChEBI" id="CHEBI:49883"/>
    </ligand>
</feature>
<feature type="binding site" evidence="1">
    <location>
        <position position="134"/>
    </location>
    <ligand>
        <name>[4Fe-4S] cluster</name>
        <dbReference type="ChEBI" id="CHEBI:49883"/>
    </ligand>
</feature>
<feature type="binding site" evidence="1">
    <location>
        <position position="163"/>
    </location>
    <ligand>
        <name>[4Fe-4S] cluster</name>
        <dbReference type="ChEBI" id="CHEBI:49883"/>
    </ligand>
</feature>
<name>NUOB_YERPS</name>
<proteinExistence type="inferred from homology"/>
<protein>
    <recommendedName>
        <fullName evidence="1">NADH-quinone oxidoreductase subunit B</fullName>
        <ecNumber evidence="1">7.1.1.-</ecNumber>
    </recommendedName>
    <alternativeName>
        <fullName evidence="1">NADH dehydrogenase I subunit B</fullName>
    </alternativeName>
    <alternativeName>
        <fullName evidence="1">NDH-1 subunit B</fullName>
    </alternativeName>
</protein>
<sequence length="225" mass="25611">MDYTLTRIDPNGENDRYPLQTQETVSGDPLEQHVHRSVYMGKLENAMHDMVNWGRKNSLWPYNFGLSCCYVEMVTSFTAVHDVARFGAEVLRASPRQADFMVVAGTCFTKMAPVIQRLYEQMLEPKWVISMGACANSGGMYDIYSVVQGVDKFLPVDVYIPGCPPRPEAYMQALLLLQESIGKERRPLSWVVGDQGVYRANMQPERERKHAERIAVTNLRTPDEI</sequence>
<evidence type="ECO:0000255" key="1">
    <source>
        <dbReference type="HAMAP-Rule" id="MF_01356"/>
    </source>
</evidence>
<comment type="function">
    <text evidence="1">NDH-1 shuttles electrons from NADH, via FMN and iron-sulfur (Fe-S) centers, to quinones in the respiratory chain. The immediate electron acceptor for the enzyme in this species is believed to be ubiquinone. Couples the redox reaction to proton translocation (for every two electrons transferred, four hydrogen ions are translocated across the cytoplasmic membrane), and thus conserves the redox energy in a proton gradient.</text>
</comment>
<comment type="catalytic activity">
    <reaction evidence="1">
        <text>a quinone + NADH + 5 H(+)(in) = a quinol + NAD(+) + 4 H(+)(out)</text>
        <dbReference type="Rhea" id="RHEA:57888"/>
        <dbReference type="ChEBI" id="CHEBI:15378"/>
        <dbReference type="ChEBI" id="CHEBI:24646"/>
        <dbReference type="ChEBI" id="CHEBI:57540"/>
        <dbReference type="ChEBI" id="CHEBI:57945"/>
        <dbReference type="ChEBI" id="CHEBI:132124"/>
    </reaction>
</comment>
<comment type="cofactor">
    <cofactor evidence="1">
        <name>[4Fe-4S] cluster</name>
        <dbReference type="ChEBI" id="CHEBI:49883"/>
    </cofactor>
    <text evidence="1">Binds 1 [4Fe-4S] cluster.</text>
</comment>
<comment type="subunit">
    <text evidence="1">NDH-1 is composed of 13 different subunits. Subunits NuoB, CD, E, F, and G constitute the peripheral sector of the complex.</text>
</comment>
<comment type="subcellular location">
    <subcellularLocation>
        <location evidence="1">Cell inner membrane</location>
        <topology evidence="1">Peripheral membrane protein</topology>
        <orientation evidence="1">Cytoplasmic side</orientation>
    </subcellularLocation>
</comment>
<comment type="similarity">
    <text evidence="1">Belongs to the complex I 20 kDa subunit family.</text>
</comment>
<dbReference type="EC" id="7.1.1.-" evidence="1"/>
<dbReference type="EMBL" id="BX936398">
    <property type="protein sequence ID" value="CAH21824.1"/>
    <property type="molecule type" value="Genomic_DNA"/>
</dbReference>
<dbReference type="RefSeq" id="WP_002210278.1">
    <property type="nucleotide sequence ID" value="NZ_CP009712.1"/>
</dbReference>
<dbReference type="SMR" id="Q669A1"/>
<dbReference type="KEGG" id="ypo:BZ17_4052"/>
<dbReference type="KEGG" id="yps:YPTB2586"/>
<dbReference type="PATRIC" id="fig|273123.14.peg.4257"/>
<dbReference type="Proteomes" id="UP000001011">
    <property type="component" value="Chromosome"/>
</dbReference>
<dbReference type="GO" id="GO:0005886">
    <property type="term" value="C:plasma membrane"/>
    <property type="evidence" value="ECO:0007669"/>
    <property type="project" value="UniProtKB-SubCell"/>
</dbReference>
<dbReference type="GO" id="GO:0045271">
    <property type="term" value="C:respiratory chain complex I"/>
    <property type="evidence" value="ECO:0007669"/>
    <property type="project" value="TreeGrafter"/>
</dbReference>
<dbReference type="GO" id="GO:0051539">
    <property type="term" value="F:4 iron, 4 sulfur cluster binding"/>
    <property type="evidence" value="ECO:0007669"/>
    <property type="project" value="UniProtKB-KW"/>
</dbReference>
<dbReference type="GO" id="GO:0005506">
    <property type="term" value="F:iron ion binding"/>
    <property type="evidence" value="ECO:0007669"/>
    <property type="project" value="UniProtKB-UniRule"/>
</dbReference>
<dbReference type="GO" id="GO:0008137">
    <property type="term" value="F:NADH dehydrogenase (ubiquinone) activity"/>
    <property type="evidence" value="ECO:0007669"/>
    <property type="project" value="InterPro"/>
</dbReference>
<dbReference type="GO" id="GO:0050136">
    <property type="term" value="F:NADH:ubiquinone reductase (non-electrogenic) activity"/>
    <property type="evidence" value="ECO:0007669"/>
    <property type="project" value="UniProtKB-UniRule"/>
</dbReference>
<dbReference type="GO" id="GO:0048038">
    <property type="term" value="F:quinone binding"/>
    <property type="evidence" value="ECO:0007669"/>
    <property type="project" value="UniProtKB-KW"/>
</dbReference>
<dbReference type="GO" id="GO:0009060">
    <property type="term" value="P:aerobic respiration"/>
    <property type="evidence" value="ECO:0007669"/>
    <property type="project" value="TreeGrafter"/>
</dbReference>
<dbReference type="GO" id="GO:0015990">
    <property type="term" value="P:electron transport coupled proton transport"/>
    <property type="evidence" value="ECO:0007669"/>
    <property type="project" value="TreeGrafter"/>
</dbReference>
<dbReference type="FunFam" id="3.40.50.12280:FF:000002">
    <property type="entry name" value="NADH-quinone oxidoreductase subunit B"/>
    <property type="match status" value="1"/>
</dbReference>
<dbReference type="Gene3D" id="3.40.50.12280">
    <property type="match status" value="1"/>
</dbReference>
<dbReference type="HAMAP" id="MF_01356">
    <property type="entry name" value="NDH1_NuoB"/>
    <property type="match status" value="1"/>
</dbReference>
<dbReference type="InterPro" id="IPR006137">
    <property type="entry name" value="NADH_UbQ_OxRdtase-like_20kDa"/>
</dbReference>
<dbReference type="InterPro" id="IPR006138">
    <property type="entry name" value="NADH_UQ_OxRdtase_20Kd_su"/>
</dbReference>
<dbReference type="NCBIfam" id="TIGR01957">
    <property type="entry name" value="nuoB_fam"/>
    <property type="match status" value="1"/>
</dbReference>
<dbReference type="NCBIfam" id="NF005012">
    <property type="entry name" value="PRK06411.1"/>
    <property type="match status" value="1"/>
</dbReference>
<dbReference type="PANTHER" id="PTHR11995">
    <property type="entry name" value="NADH DEHYDROGENASE"/>
    <property type="match status" value="1"/>
</dbReference>
<dbReference type="PANTHER" id="PTHR11995:SF14">
    <property type="entry name" value="NADH DEHYDROGENASE [UBIQUINONE] IRON-SULFUR PROTEIN 7, MITOCHONDRIAL"/>
    <property type="match status" value="1"/>
</dbReference>
<dbReference type="Pfam" id="PF01058">
    <property type="entry name" value="Oxidored_q6"/>
    <property type="match status" value="1"/>
</dbReference>
<dbReference type="SUPFAM" id="SSF56770">
    <property type="entry name" value="HydA/Nqo6-like"/>
    <property type="match status" value="1"/>
</dbReference>
<dbReference type="PROSITE" id="PS01150">
    <property type="entry name" value="COMPLEX1_20K"/>
    <property type="match status" value="1"/>
</dbReference>
<keyword id="KW-0004">4Fe-4S</keyword>
<keyword id="KW-0997">Cell inner membrane</keyword>
<keyword id="KW-1003">Cell membrane</keyword>
<keyword id="KW-0408">Iron</keyword>
<keyword id="KW-0411">Iron-sulfur</keyword>
<keyword id="KW-0472">Membrane</keyword>
<keyword id="KW-0479">Metal-binding</keyword>
<keyword id="KW-0520">NAD</keyword>
<keyword id="KW-0874">Quinone</keyword>
<keyword id="KW-1278">Translocase</keyword>
<keyword id="KW-0813">Transport</keyword>
<keyword id="KW-0830">Ubiquinone</keyword>
<organism>
    <name type="scientific">Yersinia pseudotuberculosis serotype I (strain IP32953)</name>
    <dbReference type="NCBI Taxonomy" id="273123"/>
    <lineage>
        <taxon>Bacteria</taxon>
        <taxon>Pseudomonadati</taxon>
        <taxon>Pseudomonadota</taxon>
        <taxon>Gammaproteobacteria</taxon>
        <taxon>Enterobacterales</taxon>
        <taxon>Yersiniaceae</taxon>
        <taxon>Yersinia</taxon>
    </lineage>
</organism>
<reference key="1">
    <citation type="journal article" date="2004" name="Proc. Natl. Acad. Sci. U.S.A.">
        <title>Insights into the evolution of Yersinia pestis through whole-genome comparison with Yersinia pseudotuberculosis.</title>
        <authorList>
            <person name="Chain P.S.G."/>
            <person name="Carniel E."/>
            <person name="Larimer F.W."/>
            <person name="Lamerdin J."/>
            <person name="Stoutland P.O."/>
            <person name="Regala W.M."/>
            <person name="Georgescu A.M."/>
            <person name="Vergez L.M."/>
            <person name="Land M.L."/>
            <person name="Motin V.L."/>
            <person name="Brubaker R.R."/>
            <person name="Fowler J."/>
            <person name="Hinnebusch J."/>
            <person name="Marceau M."/>
            <person name="Medigue C."/>
            <person name="Simonet M."/>
            <person name="Chenal-Francisque V."/>
            <person name="Souza B."/>
            <person name="Dacheux D."/>
            <person name="Elliott J.M."/>
            <person name="Derbise A."/>
            <person name="Hauser L.J."/>
            <person name="Garcia E."/>
        </authorList>
    </citation>
    <scope>NUCLEOTIDE SEQUENCE [LARGE SCALE GENOMIC DNA]</scope>
    <source>
        <strain>IP32953</strain>
    </source>
</reference>